<reference key="1">
    <citation type="journal article" date="2007" name="PLoS Genet.">
        <title>Patterns and implications of gene gain and loss in the evolution of Prochlorococcus.</title>
        <authorList>
            <person name="Kettler G.C."/>
            <person name="Martiny A.C."/>
            <person name="Huang K."/>
            <person name="Zucker J."/>
            <person name="Coleman M.L."/>
            <person name="Rodrigue S."/>
            <person name="Chen F."/>
            <person name="Lapidus A."/>
            <person name="Ferriera S."/>
            <person name="Johnson J."/>
            <person name="Steglich C."/>
            <person name="Church G.M."/>
            <person name="Richardson P."/>
            <person name="Chisholm S.W."/>
        </authorList>
    </citation>
    <scope>NUCLEOTIDE SEQUENCE [LARGE SCALE GENOMIC DNA]</scope>
    <source>
        <strain>NATL2A</strain>
    </source>
</reference>
<evidence type="ECO:0000255" key="1">
    <source>
        <dbReference type="HAMAP-Rule" id="MF_01025"/>
    </source>
</evidence>
<accession>Q46K01</accession>
<organism>
    <name type="scientific">Prochlorococcus marinus (strain NATL2A)</name>
    <dbReference type="NCBI Taxonomy" id="59920"/>
    <lineage>
        <taxon>Bacteria</taxon>
        <taxon>Bacillati</taxon>
        <taxon>Cyanobacteriota</taxon>
        <taxon>Cyanophyceae</taxon>
        <taxon>Synechococcales</taxon>
        <taxon>Prochlorococcaceae</taxon>
        <taxon>Prochlorococcus</taxon>
    </lineage>
</organism>
<feature type="chain" id="PRO_1000149249" description="2-isopropylmalate synthase">
    <location>
        <begin position="1"/>
        <end position="539"/>
    </location>
</feature>
<feature type="domain" description="Pyruvate carboxyltransferase" evidence="1">
    <location>
        <begin position="8"/>
        <end position="269"/>
    </location>
</feature>
<feature type="region of interest" description="Regulatory domain" evidence="1">
    <location>
        <begin position="408"/>
        <end position="539"/>
    </location>
</feature>
<feature type="binding site" evidence="1">
    <location>
        <position position="17"/>
    </location>
    <ligand>
        <name>Mn(2+)</name>
        <dbReference type="ChEBI" id="CHEBI:29035"/>
    </ligand>
</feature>
<feature type="binding site" evidence="1">
    <location>
        <position position="208"/>
    </location>
    <ligand>
        <name>Mn(2+)</name>
        <dbReference type="ChEBI" id="CHEBI:29035"/>
    </ligand>
</feature>
<feature type="binding site" evidence="1">
    <location>
        <position position="210"/>
    </location>
    <ligand>
        <name>Mn(2+)</name>
        <dbReference type="ChEBI" id="CHEBI:29035"/>
    </ligand>
</feature>
<feature type="binding site" evidence="1">
    <location>
        <position position="244"/>
    </location>
    <ligand>
        <name>Mn(2+)</name>
        <dbReference type="ChEBI" id="CHEBI:29035"/>
    </ligand>
</feature>
<comment type="function">
    <text evidence="1">Catalyzes the condensation of the acetyl group of acetyl-CoA with 3-methyl-2-oxobutanoate (2-ketoisovalerate) to form 3-carboxy-3-hydroxy-4-methylpentanoate (2-isopropylmalate).</text>
</comment>
<comment type="catalytic activity">
    <reaction evidence="1">
        <text>3-methyl-2-oxobutanoate + acetyl-CoA + H2O = (2S)-2-isopropylmalate + CoA + H(+)</text>
        <dbReference type="Rhea" id="RHEA:21524"/>
        <dbReference type="ChEBI" id="CHEBI:1178"/>
        <dbReference type="ChEBI" id="CHEBI:11851"/>
        <dbReference type="ChEBI" id="CHEBI:15377"/>
        <dbReference type="ChEBI" id="CHEBI:15378"/>
        <dbReference type="ChEBI" id="CHEBI:57287"/>
        <dbReference type="ChEBI" id="CHEBI:57288"/>
        <dbReference type="EC" id="2.3.3.13"/>
    </reaction>
</comment>
<comment type="cofactor">
    <cofactor evidence="1">
        <name>Mn(2+)</name>
        <dbReference type="ChEBI" id="CHEBI:29035"/>
    </cofactor>
</comment>
<comment type="pathway">
    <text evidence="1">Amino-acid biosynthesis; L-leucine biosynthesis; L-leucine from 3-methyl-2-oxobutanoate: step 1/4.</text>
</comment>
<comment type="subunit">
    <text evidence="1">Homodimer.</text>
</comment>
<comment type="subcellular location">
    <subcellularLocation>
        <location evidence="1">Cytoplasm</location>
    </subcellularLocation>
</comment>
<comment type="similarity">
    <text evidence="1">Belongs to the alpha-IPM synthase/homocitrate synthase family. LeuA type 1 subfamily.</text>
</comment>
<name>LEU1_PROMT</name>
<sequence length="539" mass="58105">MAKDPGRVLIFDTTLRDGEQSPGASLNLEEKLAIAQQLARLGVDVIEAGFPFASPGDFAAVQKIAENVGGEEGPIICGLSRASKPDIKACANAIAPAPKKRIHTFIATSDIHLEHKLRKSRKEVLDIVPDMVGYAKSFVDDVEFSCEDAARSDLDFLYEVIELAISSGANTINIPDTVGYITPSEFGDLILNINKNVPNINEAVLSVHGHNDLGLAVANFLEAVKNGARQLECTINGIGERAGNAALEELIMALHVRRSYFNPFFGRPPESPTPLTAVRTEEITKSSRLVSNLTGMVVQPNKAIVGANAFAHESGIHQDGVLKNRLTYEIIDAKTVGLSDNKISLGKLSGRSAVRARLEDLGYDLNREDLNDAFARFKDLADRKREITDRDLEAIVSEQVQLPEALFQLKLVQVSCGTSLMPTATVTVVGEDGEEKTAVSLGTGPVDAVVRALDSLTEEPNELIEFSVKSVTEGIDALGEVTIRIRRDGNLFSGHSADTDVVVAAAQAYINALNRLVAAHGRKSIHPQHDLAKVEKKGI</sequence>
<keyword id="KW-0028">Amino-acid biosynthesis</keyword>
<keyword id="KW-0100">Branched-chain amino acid biosynthesis</keyword>
<keyword id="KW-0963">Cytoplasm</keyword>
<keyword id="KW-0432">Leucine biosynthesis</keyword>
<keyword id="KW-0464">Manganese</keyword>
<keyword id="KW-0479">Metal-binding</keyword>
<keyword id="KW-1185">Reference proteome</keyword>
<keyword id="KW-0808">Transferase</keyword>
<protein>
    <recommendedName>
        <fullName evidence="1">2-isopropylmalate synthase</fullName>
        <ecNumber evidence="1">2.3.3.13</ecNumber>
    </recommendedName>
    <alternativeName>
        <fullName evidence="1">Alpha-IPM synthase</fullName>
    </alternativeName>
    <alternativeName>
        <fullName evidence="1">Alpha-isopropylmalate synthase</fullName>
    </alternativeName>
</protein>
<dbReference type="EC" id="2.3.3.13" evidence="1"/>
<dbReference type="EMBL" id="CP000095">
    <property type="protein sequence ID" value="AAZ58177.1"/>
    <property type="molecule type" value="Genomic_DNA"/>
</dbReference>
<dbReference type="RefSeq" id="WP_011294775.1">
    <property type="nucleotide sequence ID" value="NC_007335.2"/>
</dbReference>
<dbReference type="SMR" id="Q46K01"/>
<dbReference type="STRING" id="59920.PMN2A_0686"/>
<dbReference type="KEGG" id="pmn:PMN2A_0686"/>
<dbReference type="HOGENOM" id="CLU_022158_0_1_3"/>
<dbReference type="OrthoDB" id="9804858at2"/>
<dbReference type="PhylomeDB" id="Q46K01"/>
<dbReference type="UniPathway" id="UPA00048">
    <property type="reaction ID" value="UER00070"/>
</dbReference>
<dbReference type="Proteomes" id="UP000002535">
    <property type="component" value="Chromosome"/>
</dbReference>
<dbReference type="GO" id="GO:0005737">
    <property type="term" value="C:cytoplasm"/>
    <property type="evidence" value="ECO:0007669"/>
    <property type="project" value="UniProtKB-SubCell"/>
</dbReference>
<dbReference type="GO" id="GO:0003852">
    <property type="term" value="F:2-isopropylmalate synthase activity"/>
    <property type="evidence" value="ECO:0007669"/>
    <property type="project" value="UniProtKB-UniRule"/>
</dbReference>
<dbReference type="GO" id="GO:0003985">
    <property type="term" value="F:acetyl-CoA C-acetyltransferase activity"/>
    <property type="evidence" value="ECO:0007669"/>
    <property type="project" value="UniProtKB-UniRule"/>
</dbReference>
<dbReference type="GO" id="GO:0030145">
    <property type="term" value="F:manganese ion binding"/>
    <property type="evidence" value="ECO:0007669"/>
    <property type="project" value="UniProtKB-UniRule"/>
</dbReference>
<dbReference type="GO" id="GO:0009098">
    <property type="term" value="P:L-leucine biosynthetic process"/>
    <property type="evidence" value="ECO:0007669"/>
    <property type="project" value="UniProtKB-UniRule"/>
</dbReference>
<dbReference type="CDD" id="cd07940">
    <property type="entry name" value="DRE_TIM_IPMS"/>
    <property type="match status" value="1"/>
</dbReference>
<dbReference type="FunFam" id="1.10.238.260:FF:000001">
    <property type="entry name" value="2-isopropylmalate synthase"/>
    <property type="match status" value="1"/>
</dbReference>
<dbReference type="FunFam" id="3.20.20.70:FF:000010">
    <property type="entry name" value="2-isopropylmalate synthase"/>
    <property type="match status" value="1"/>
</dbReference>
<dbReference type="FunFam" id="3.30.160.270:FF:000001">
    <property type="entry name" value="2-isopropylmalate synthase"/>
    <property type="match status" value="1"/>
</dbReference>
<dbReference type="Gene3D" id="1.10.238.260">
    <property type="match status" value="1"/>
</dbReference>
<dbReference type="Gene3D" id="3.30.160.270">
    <property type="match status" value="1"/>
</dbReference>
<dbReference type="Gene3D" id="3.20.20.70">
    <property type="entry name" value="Aldolase class I"/>
    <property type="match status" value="1"/>
</dbReference>
<dbReference type="HAMAP" id="MF_01025">
    <property type="entry name" value="LeuA_type1"/>
    <property type="match status" value="1"/>
</dbReference>
<dbReference type="InterPro" id="IPR050073">
    <property type="entry name" value="2-IPM_HCS-like"/>
</dbReference>
<dbReference type="InterPro" id="IPR013709">
    <property type="entry name" value="2-isopropylmalate_synth_dimer"/>
</dbReference>
<dbReference type="InterPro" id="IPR002034">
    <property type="entry name" value="AIPM/Hcit_synth_CS"/>
</dbReference>
<dbReference type="InterPro" id="IPR013785">
    <property type="entry name" value="Aldolase_TIM"/>
</dbReference>
<dbReference type="InterPro" id="IPR054691">
    <property type="entry name" value="LeuA/HCS_post-cat"/>
</dbReference>
<dbReference type="InterPro" id="IPR036230">
    <property type="entry name" value="LeuA_allosteric_dom_sf"/>
</dbReference>
<dbReference type="InterPro" id="IPR005671">
    <property type="entry name" value="LeuA_bact_synth"/>
</dbReference>
<dbReference type="InterPro" id="IPR000891">
    <property type="entry name" value="PYR_CT"/>
</dbReference>
<dbReference type="NCBIfam" id="TIGR00973">
    <property type="entry name" value="leuA_bact"/>
    <property type="match status" value="1"/>
</dbReference>
<dbReference type="NCBIfam" id="NF002086">
    <property type="entry name" value="PRK00915.1-3"/>
    <property type="match status" value="1"/>
</dbReference>
<dbReference type="PANTHER" id="PTHR10277:SF9">
    <property type="entry name" value="2-ISOPROPYLMALATE SYNTHASE 1, CHLOROPLASTIC-RELATED"/>
    <property type="match status" value="1"/>
</dbReference>
<dbReference type="PANTHER" id="PTHR10277">
    <property type="entry name" value="HOMOCITRATE SYNTHASE-RELATED"/>
    <property type="match status" value="1"/>
</dbReference>
<dbReference type="Pfam" id="PF22617">
    <property type="entry name" value="HCS_D2"/>
    <property type="match status" value="1"/>
</dbReference>
<dbReference type="Pfam" id="PF00682">
    <property type="entry name" value="HMGL-like"/>
    <property type="match status" value="1"/>
</dbReference>
<dbReference type="Pfam" id="PF08502">
    <property type="entry name" value="LeuA_dimer"/>
    <property type="match status" value="1"/>
</dbReference>
<dbReference type="SMART" id="SM00917">
    <property type="entry name" value="LeuA_dimer"/>
    <property type="match status" value="1"/>
</dbReference>
<dbReference type="SUPFAM" id="SSF110921">
    <property type="entry name" value="2-isopropylmalate synthase LeuA, allosteric (dimerisation) domain"/>
    <property type="match status" value="1"/>
</dbReference>
<dbReference type="SUPFAM" id="SSF51569">
    <property type="entry name" value="Aldolase"/>
    <property type="match status" value="1"/>
</dbReference>
<dbReference type="PROSITE" id="PS00815">
    <property type="entry name" value="AIPM_HOMOCIT_SYNTH_1"/>
    <property type="match status" value="1"/>
</dbReference>
<dbReference type="PROSITE" id="PS00816">
    <property type="entry name" value="AIPM_HOMOCIT_SYNTH_2"/>
    <property type="match status" value="1"/>
</dbReference>
<dbReference type="PROSITE" id="PS50991">
    <property type="entry name" value="PYR_CT"/>
    <property type="match status" value="1"/>
</dbReference>
<gene>
    <name evidence="1" type="primary">leuA</name>
    <name type="ordered locus">PMN2A_0686</name>
</gene>
<proteinExistence type="inferred from homology"/>